<sequence>MEAWYMDDSADDQRKPHHRSPPEYVSLEKLAELGVLHWVLDADSFETDPELQRIRKERGYNYEDFIEVSPERLANYETKIKNFYEEHMHTDEEIRYCLDGSGYFDIRDPEDRWIRIWVKKGDMIVLPAGSYHRFTLDENNYLKAMRLFVGEPVWTPYNRPQDEHPVRKDYINNFLKTHLDKIDVSLSTQHAATA</sequence>
<organism>
    <name type="scientific">Physcomitrium patens</name>
    <name type="common">Spreading-leaved earth moss</name>
    <name type="synonym">Physcomitrella patens</name>
    <dbReference type="NCBI Taxonomy" id="3218"/>
    <lineage>
        <taxon>Eukaryota</taxon>
        <taxon>Viridiplantae</taxon>
        <taxon>Streptophyta</taxon>
        <taxon>Embryophyta</taxon>
        <taxon>Bryophyta</taxon>
        <taxon>Bryophytina</taxon>
        <taxon>Bryopsida</taxon>
        <taxon>Funariidae</taxon>
        <taxon>Funariales</taxon>
        <taxon>Funariaceae</taxon>
        <taxon>Physcomitrium</taxon>
    </lineage>
</organism>
<dbReference type="EC" id="1.13.11.54" evidence="1"/>
<dbReference type="EC" id="1.13.11.53" evidence="1"/>
<dbReference type="EMBL" id="DS544958">
    <property type="protein sequence ID" value="EDQ70527.1"/>
    <property type="molecule type" value="Genomic_DNA"/>
</dbReference>
<dbReference type="RefSeq" id="XP_001764545.1">
    <property type="nucleotide sequence ID" value="XM_001764493.1"/>
</dbReference>
<dbReference type="SMR" id="A9SDW6"/>
<dbReference type="FunCoup" id="A9SDW6">
    <property type="interactions" value="3432"/>
</dbReference>
<dbReference type="PaxDb" id="3218-PP1S69_28V6.1"/>
<dbReference type="eggNOG" id="KOG2107">
    <property type="taxonomic scope" value="Eukaryota"/>
</dbReference>
<dbReference type="HOGENOM" id="CLU_090154_0_1_1"/>
<dbReference type="InParanoid" id="A9SDW6"/>
<dbReference type="UniPathway" id="UPA00904">
    <property type="reaction ID" value="UER00878"/>
</dbReference>
<dbReference type="Proteomes" id="UP000006727">
    <property type="component" value="Chromosome 14"/>
</dbReference>
<dbReference type="GO" id="GO:0005737">
    <property type="term" value="C:cytoplasm"/>
    <property type="evidence" value="ECO:0007669"/>
    <property type="project" value="UniProtKB-SubCell"/>
</dbReference>
<dbReference type="GO" id="GO:0005634">
    <property type="term" value="C:nucleus"/>
    <property type="evidence" value="ECO:0007669"/>
    <property type="project" value="UniProtKB-SubCell"/>
</dbReference>
<dbReference type="GO" id="GO:0010308">
    <property type="term" value="F:acireductone dioxygenase (Ni2+-requiring) activity"/>
    <property type="evidence" value="ECO:0007669"/>
    <property type="project" value="UniProtKB-UniRule"/>
</dbReference>
<dbReference type="GO" id="GO:0010309">
    <property type="term" value="F:acireductone dioxygenase [iron(II)-requiring] activity"/>
    <property type="evidence" value="ECO:0007669"/>
    <property type="project" value="UniProtKB-UniRule"/>
</dbReference>
<dbReference type="GO" id="GO:0005506">
    <property type="term" value="F:iron ion binding"/>
    <property type="evidence" value="ECO:0007669"/>
    <property type="project" value="UniProtKB-UniRule"/>
</dbReference>
<dbReference type="GO" id="GO:0016151">
    <property type="term" value="F:nickel cation binding"/>
    <property type="evidence" value="ECO:0007669"/>
    <property type="project" value="UniProtKB-UniRule"/>
</dbReference>
<dbReference type="GO" id="GO:0019509">
    <property type="term" value="P:L-methionine salvage from methylthioadenosine"/>
    <property type="evidence" value="ECO:0007669"/>
    <property type="project" value="UniProtKB-UniRule"/>
</dbReference>
<dbReference type="CDD" id="cd02232">
    <property type="entry name" value="cupin_ARD"/>
    <property type="match status" value="1"/>
</dbReference>
<dbReference type="FunFam" id="2.60.120.10:FF:000031">
    <property type="entry name" value="1,2-dihydroxy-3-keto-5-methylthiopentene dioxygenase"/>
    <property type="match status" value="1"/>
</dbReference>
<dbReference type="Gene3D" id="2.60.120.10">
    <property type="entry name" value="Jelly Rolls"/>
    <property type="match status" value="1"/>
</dbReference>
<dbReference type="HAMAP" id="MF_03154">
    <property type="entry name" value="Salvage_MtnD_euk"/>
    <property type="match status" value="1"/>
</dbReference>
<dbReference type="InterPro" id="IPR004313">
    <property type="entry name" value="ARD"/>
</dbReference>
<dbReference type="InterPro" id="IPR027496">
    <property type="entry name" value="ARD_euk"/>
</dbReference>
<dbReference type="InterPro" id="IPR014710">
    <property type="entry name" value="RmlC-like_jellyroll"/>
</dbReference>
<dbReference type="InterPro" id="IPR011051">
    <property type="entry name" value="RmlC_Cupin_sf"/>
</dbReference>
<dbReference type="PANTHER" id="PTHR23418">
    <property type="entry name" value="ACIREDUCTONE DIOXYGENASE"/>
    <property type="match status" value="1"/>
</dbReference>
<dbReference type="PANTHER" id="PTHR23418:SF0">
    <property type="entry name" value="ACIREDUCTONE DIOXYGENASE"/>
    <property type="match status" value="1"/>
</dbReference>
<dbReference type="Pfam" id="PF03079">
    <property type="entry name" value="ARD"/>
    <property type="match status" value="1"/>
</dbReference>
<dbReference type="SUPFAM" id="SSF51182">
    <property type="entry name" value="RmlC-like cupins"/>
    <property type="match status" value="1"/>
</dbReference>
<feature type="chain" id="PRO_0000414342" description="Acireductone dioxygenase 1">
    <location>
        <begin position="1"/>
        <end position="194"/>
    </location>
</feature>
<feature type="region of interest" description="Disordered" evidence="2">
    <location>
        <begin position="1"/>
        <end position="21"/>
    </location>
</feature>
<feature type="binding site" evidence="1">
    <location>
        <position position="87"/>
    </location>
    <ligand>
        <name>Fe(2+)</name>
        <dbReference type="ChEBI" id="CHEBI:29033"/>
        <note>for iron-dependent acireductone dioxygenase activity</note>
    </ligand>
</feature>
<feature type="binding site" evidence="1">
    <location>
        <position position="87"/>
    </location>
    <ligand>
        <name>Ni(2+)</name>
        <dbReference type="ChEBI" id="CHEBI:49786"/>
        <note>for nickel-dependent acireductone dioxygenase activity</note>
    </ligand>
</feature>
<feature type="binding site" evidence="1">
    <location>
        <position position="89"/>
    </location>
    <ligand>
        <name>Fe(2+)</name>
        <dbReference type="ChEBI" id="CHEBI:29033"/>
        <note>for iron-dependent acireductone dioxygenase activity</note>
    </ligand>
</feature>
<feature type="binding site" evidence="1">
    <location>
        <position position="89"/>
    </location>
    <ligand>
        <name>Ni(2+)</name>
        <dbReference type="ChEBI" id="CHEBI:49786"/>
        <note>for nickel-dependent acireductone dioxygenase activity</note>
    </ligand>
</feature>
<feature type="binding site" evidence="1">
    <location>
        <position position="93"/>
    </location>
    <ligand>
        <name>Fe(2+)</name>
        <dbReference type="ChEBI" id="CHEBI:29033"/>
        <note>for iron-dependent acireductone dioxygenase activity</note>
    </ligand>
</feature>
<feature type="binding site" evidence="1">
    <location>
        <position position="93"/>
    </location>
    <ligand>
        <name>Ni(2+)</name>
        <dbReference type="ChEBI" id="CHEBI:49786"/>
        <note>for nickel-dependent acireductone dioxygenase activity</note>
    </ligand>
</feature>
<feature type="binding site" evidence="1">
    <location>
        <position position="132"/>
    </location>
    <ligand>
        <name>Fe(2+)</name>
        <dbReference type="ChEBI" id="CHEBI:29033"/>
        <note>for iron-dependent acireductone dioxygenase activity</note>
    </ligand>
</feature>
<feature type="binding site" evidence="1">
    <location>
        <position position="132"/>
    </location>
    <ligand>
        <name>Ni(2+)</name>
        <dbReference type="ChEBI" id="CHEBI:49786"/>
        <note>for nickel-dependent acireductone dioxygenase activity</note>
    </ligand>
</feature>
<protein>
    <recommendedName>
        <fullName evidence="1">Acireductone dioxygenase 1</fullName>
    </recommendedName>
    <alternativeName>
        <fullName evidence="1">Acireductone dioxygenase (Fe(2+)-requiring) 1</fullName>
        <shortName evidence="1">ARD' 1</shortName>
        <shortName evidence="1">Fe-ARD 1</shortName>
        <ecNumber evidence="1">1.13.11.54</ecNumber>
    </alternativeName>
    <alternativeName>
        <fullName evidence="1">Acireductone dioxygenase (Ni(2+)-requiring) 1</fullName>
        <shortName evidence="1">ARD 1</shortName>
        <shortName evidence="1">Ni-ARD 1</shortName>
        <ecNumber evidence="1">1.13.11.53</ecNumber>
    </alternativeName>
</protein>
<comment type="function">
    <text evidence="1">Catalyzes 2 different reactions between oxygen and the acireductone 1,2-dihydroxy-3-keto-5-methylthiopentene (DHK-MTPene) depending upon the metal bound in the active site. Fe-containing acireductone dioxygenase (Fe-ARD) produces formate and 2-keto-4-methylthiobutyrate (KMTB), the alpha-ketoacid precursor of methionine in the methionine recycle pathway. Ni-containing acireductone dioxygenase (Ni-ARD) produces methylthiopropionate, carbon monoxide and formate, and does not lie on the methionine recycle pathway.</text>
</comment>
<comment type="catalytic activity">
    <reaction evidence="1">
        <text>1,2-dihydroxy-5-(methylsulfanyl)pent-1-en-3-one + O2 = 4-methylsulfanyl-2-oxobutanoate + formate + 2 H(+)</text>
        <dbReference type="Rhea" id="RHEA:24504"/>
        <dbReference type="ChEBI" id="CHEBI:15378"/>
        <dbReference type="ChEBI" id="CHEBI:15379"/>
        <dbReference type="ChEBI" id="CHEBI:15740"/>
        <dbReference type="ChEBI" id="CHEBI:16723"/>
        <dbReference type="ChEBI" id="CHEBI:49252"/>
        <dbReference type="EC" id="1.13.11.54"/>
    </reaction>
</comment>
<comment type="catalytic activity">
    <reaction evidence="1">
        <text>1,2-dihydroxy-5-(methylsulfanyl)pent-1-en-3-one + O2 = 3-(methylsulfanyl)propanoate + CO + formate + 2 H(+)</text>
        <dbReference type="Rhea" id="RHEA:14161"/>
        <dbReference type="ChEBI" id="CHEBI:15378"/>
        <dbReference type="ChEBI" id="CHEBI:15379"/>
        <dbReference type="ChEBI" id="CHEBI:15740"/>
        <dbReference type="ChEBI" id="CHEBI:17245"/>
        <dbReference type="ChEBI" id="CHEBI:49016"/>
        <dbReference type="ChEBI" id="CHEBI:49252"/>
        <dbReference type="EC" id="1.13.11.53"/>
    </reaction>
</comment>
<comment type="cofactor">
    <cofactor evidence="1">
        <name>Fe(2+)</name>
        <dbReference type="ChEBI" id="CHEBI:29033"/>
    </cofactor>
    <cofactor evidence="1">
        <name>Ni(2+)</name>
        <dbReference type="ChEBI" id="CHEBI:49786"/>
    </cofactor>
    <text evidence="1">Binds either 1 Fe or Ni cation per monomer. Iron-binding promotes an acireductone dioxygenase reaction producing 2-keto-4-methylthiobutyrate, while nickel-binding promotes an acireductone dioxygenase reaction producing 3-(methylsulfanyl)propanoate.</text>
</comment>
<comment type="pathway">
    <text evidence="1">Amino-acid biosynthesis; L-methionine biosynthesis via salvage pathway; L-methionine from S-methyl-5-thio-alpha-D-ribose 1-phosphate: step 5/6.</text>
</comment>
<comment type="subcellular location">
    <subcellularLocation>
        <location evidence="1">Cytoplasm</location>
    </subcellularLocation>
    <subcellularLocation>
        <location evidence="1">Nucleus</location>
    </subcellularLocation>
</comment>
<comment type="similarity">
    <text evidence="1">Belongs to the acireductone dioxygenase (ARD) family.</text>
</comment>
<evidence type="ECO:0000255" key="1">
    <source>
        <dbReference type="HAMAP-Rule" id="MF_03154"/>
    </source>
</evidence>
<evidence type="ECO:0000256" key="2">
    <source>
        <dbReference type="SAM" id="MobiDB-lite"/>
    </source>
</evidence>
<proteinExistence type="inferred from homology"/>
<keyword id="KW-0028">Amino-acid biosynthesis</keyword>
<keyword id="KW-0963">Cytoplasm</keyword>
<keyword id="KW-0223">Dioxygenase</keyword>
<keyword id="KW-0408">Iron</keyword>
<keyword id="KW-0479">Metal-binding</keyword>
<keyword id="KW-0486">Methionine biosynthesis</keyword>
<keyword id="KW-0533">Nickel</keyword>
<keyword id="KW-0539">Nucleus</keyword>
<keyword id="KW-0560">Oxidoreductase</keyword>
<keyword id="KW-1185">Reference proteome</keyword>
<name>MTND1_PHYPA</name>
<gene>
    <name type="ORF">PHYPADRAFT_128349</name>
</gene>
<reference key="1">
    <citation type="journal article" date="2008" name="Science">
        <title>The Physcomitrella genome reveals evolutionary insights into the conquest of land by plants.</title>
        <authorList>
            <person name="Rensing S.A."/>
            <person name="Lang D."/>
            <person name="Zimmer A.D."/>
            <person name="Terry A."/>
            <person name="Salamov A."/>
            <person name="Shapiro H."/>
            <person name="Nishiyama T."/>
            <person name="Perroud P.-F."/>
            <person name="Lindquist E.A."/>
            <person name="Kamisugi Y."/>
            <person name="Tanahashi T."/>
            <person name="Sakakibara K."/>
            <person name="Fujita T."/>
            <person name="Oishi K."/>
            <person name="Shin-I T."/>
            <person name="Kuroki Y."/>
            <person name="Toyoda A."/>
            <person name="Suzuki Y."/>
            <person name="Hashimoto S.-I."/>
            <person name="Yamaguchi K."/>
            <person name="Sugano S."/>
            <person name="Kohara Y."/>
            <person name="Fujiyama A."/>
            <person name="Anterola A."/>
            <person name="Aoki S."/>
            <person name="Ashton N."/>
            <person name="Barbazuk W.B."/>
            <person name="Barker E."/>
            <person name="Bennetzen J.L."/>
            <person name="Blankenship R."/>
            <person name="Cho S.H."/>
            <person name="Dutcher S.K."/>
            <person name="Estelle M."/>
            <person name="Fawcett J.A."/>
            <person name="Gundlach H."/>
            <person name="Hanada K."/>
            <person name="Heyl A."/>
            <person name="Hicks K.A."/>
            <person name="Hughes J."/>
            <person name="Lohr M."/>
            <person name="Mayer K."/>
            <person name="Melkozernov A."/>
            <person name="Murata T."/>
            <person name="Nelson D.R."/>
            <person name="Pils B."/>
            <person name="Prigge M."/>
            <person name="Reiss B."/>
            <person name="Renner T."/>
            <person name="Rombauts S."/>
            <person name="Rushton P.J."/>
            <person name="Sanderfoot A."/>
            <person name="Schween G."/>
            <person name="Shiu S.-H."/>
            <person name="Stueber K."/>
            <person name="Theodoulou F.L."/>
            <person name="Tu H."/>
            <person name="Van de Peer Y."/>
            <person name="Verrier P.J."/>
            <person name="Waters E."/>
            <person name="Wood A."/>
            <person name="Yang L."/>
            <person name="Cove D."/>
            <person name="Cuming A.C."/>
            <person name="Hasebe M."/>
            <person name="Lucas S."/>
            <person name="Mishler B.D."/>
            <person name="Reski R."/>
            <person name="Grigoriev I.V."/>
            <person name="Quatrano R.S."/>
            <person name="Boore J.L."/>
        </authorList>
    </citation>
    <scope>NUCLEOTIDE SEQUENCE [LARGE SCALE GENOMIC DNA]</scope>
    <source>
        <strain>cv. Gransden 2004</strain>
    </source>
</reference>
<accession>A9SDW6</accession>